<gene>
    <name type="ordered locus">XC_3032</name>
</gene>
<sequence length="270" mass="30068">MTARDFLEFRERLAPASGFQSAQLREIEILLGLEDTQRISIGNGCSYRDALKLPGGAPSSSAQRVEARAADGPSFKHCLYDWLSRVPIDGSNAPADITRFLEAYLASLRAENDRRLKLASSGLAAAEIEQLRARYAAEDAGAQAFLLAEDDPQASDAERETRRAGRAAMLFIESYRELPQLAWPHALLESVLELEQAMLIWRQRHARMVERFIGRRIGTGGSSGVDYLDQTARYRIFTELWTVRSLLLRKAAVPQIRSSAGYGFVMEGFA</sequence>
<name>T23OL_XANC8</name>
<accession>Q4US93</accession>
<organism>
    <name type="scientific">Xanthomonas campestris pv. campestris (strain 8004)</name>
    <dbReference type="NCBI Taxonomy" id="314565"/>
    <lineage>
        <taxon>Bacteria</taxon>
        <taxon>Pseudomonadati</taxon>
        <taxon>Pseudomonadota</taxon>
        <taxon>Gammaproteobacteria</taxon>
        <taxon>Lysobacterales</taxon>
        <taxon>Lysobacteraceae</taxon>
        <taxon>Xanthomonas</taxon>
    </lineage>
</organism>
<protein>
    <recommendedName>
        <fullName>Tryptophan 2,3-dioxygenase-like protein</fullName>
        <shortName>TO-like protein</shortName>
    </recommendedName>
    <alternativeName>
        <fullName>Tryptamin 2,3-dioxygenase-like protein</fullName>
        <shortName>TRPO-like protein</shortName>
    </alternativeName>
    <alternativeName>
        <fullName>Tryptophan oxygenase-like protein</fullName>
    </alternativeName>
    <alternativeName>
        <fullName>Tryptophan pyrrolase-like protein</fullName>
    </alternativeName>
    <alternativeName>
        <fullName>Tryptophanase-like protein</fullName>
    </alternativeName>
</protein>
<comment type="similarity">
    <text evidence="1">Belongs to the tryptophan 2,3-dioxygenase family.</text>
</comment>
<proteinExistence type="inferred from homology"/>
<reference key="1">
    <citation type="journal article" date="2005" name="Genome Res.">
        <title>Comparative and functional genomic analyses of the pathogenicity of phytopathogen Xanthomonas campestris pv. campestris.</title>
        <authorList>
            <person name="Qian W."/>
            <person name="Jia Y."/>
            <person name="Ren S.-X."/>
            <person name="He Y.-Q."/>
            <person name="Feng J.-X."/>
            <person name="Lu L.-F."/>
            <person name="Sun Q."/>
            <person name="Ying G."/>
            <person name="Tang D.-J."/>
            <person name="Tang H."/>
            <person name="Wu W."/>
            <person name="Hao P."/>
            <person name="Wang L."/>
            <person name="Jiang B.-L."/>
            <person name="Zeng S."/>
            <person name="Gu W.-Y."/>
            <person name="Lu G."/>
            <person name="Rong L."/>
            <person name="Tian Y."/>
            <person name="Yao Z."/>
            <person name="Fu G."/>
            <person name="Chen B."/>
            <person name="Fang R."/>
            <person name="Qiang B."/>
            <person name="Chen Z."/>
            <person name="Zhao G.-P."/>
            <person name="Tang J.-L."/>
            <person name="He C."/>
        </authorList>
    </citation>
    <scope>NUCLEOTIDE SEQUENCE [LARGE SCALE GENOMIC DNA]</scope>
    <source>
        <strain>8004</strain>
    </source>
</reference>
<evidence type="ECO:0000305" key="1"/>
<dbReference type="EMBL" id="CP000050">
    <property type="protein sequence ID" value="AAY50080.1"/>
    <property type="molecule type" value="Genomic_DNA"/>
</dbReference>
<dbReference type="RefSeq" id="WP_011036406.1">
    <property type="nucleotide sequence ID" value="NZ_CP155948.1"/>
</dbReference>
<dbReference type="SMR" id="Q4US93"/>
<dbReference type="KEGG" id="xcb:XC_3032"/>
<dbReference type="HOGENOM" id="CLU_045599_1_1_6"/>
<dbReference type="Proteomes" id="UP000000420">
    <property type="component" value="Chromosome"/>
</dbReference>
<dbReference type="GO" id="GO:0020037">
    <property type="term" value="F:heme binding"/>
    <property type="evidence" value="ECO:0007669"/>
    <property type="project" value="InterPro"/>
</dbReference>
<dbReference type="GO" id="GO:0046872">
    <property type="term" value="F:metal ion binding"/>
    <property type="evidence" value="ECO:0007669"/>
    <property type="project" value="InterPro"/>
</dbReference>
<dbReference type="GO" id="GO:0004833">
    <property type="term" value="F:tryptophan 2,3-dioxygenase activity"/>
    <property type="evidence" value="ECO:0007669"/>
    <property type="project" value="InterPro"/>
</dbReference>
<dbReference type="GO" id="GO:0019442">
    <property type="term" value="P:L-tryptophan catabolic process to acetyl-CoA"/>
    <property type="evidence" value="ECO:0007669"/>
    <property type="project" value="TreeGrafter"/>
</dbReference>
<dbReference type="GO" id="GO:0019441">
    <property type="term" value="P:L-tryptophan catabolic process to kynurenine"/>
    <property type="evidence" value="ECO:0007669"/>
    <property type="project" value="InterPro"/>
</dbReference>
<dbReference type="Gene3D" id="1.20.58.480">
    <property type="match status" value="1"/>
</dbReference>
<dbReference type="InterPro" id="IPR037217">
    <property type="entry name" value="Trp/Indoleamine_2_3_dOase-like"/>
</dbReference>
<dbReference type="InterPro" id="IPR004981">
    <property type="entry name" value="Trp_2_3_dOase"/>
</dbReference>
<dbReference type="PANTHER" id="PTHR10138">
    <property type="entry name" value="TRYPTOPHAN 2,3-DIOXYGENASE"/>
    <property type="match status" value="1"/>
</dbReference>
<dbReference type="PANTHER" id="PTHR10138:SF0">
    <property type="entry name" value="TRYPTOPHAN 2,3-DIOXYGENASE"/>
    <property type="match status" value="1"/>
</dbReference>
<dbReference type="Pfam" id="PF03301">
    <property type="entry name" value="Trp_dioxygenase"/>
    <property type="match status" value="1"/>
</dbReference>
<dbReference type="SUPFAM" id="SSF140959">
    <property type="entry name" value="Indolic compounds 2,3-dioxygenase-like"/>
    <property type="match status" value="1"/>
</dbReference>
<feature type="chain" id="PRO_0000360978" description="Tryptophan 2,3-dioxygenase-like protein">
    <location>
        <begin position="1"/>
        <end position="270"/>
    </location>
</feature>